<accession>A3N2D8</accession>
<name>MNME_ACTP2</name>
<comment type="function">
    <text evidence="1">Exhibits a very high intrinsic GTPase hydrolysis rate. Involved in the addition of a carboxymethylaminomethyl (cmnm) group at the wobble position (U34) of certain tRNAs, forming tRNA-cmnm(5)s(2)U34.</text>
</comment>
<comment type="cofactor">
    <cofactor evidence="1">
        <name>K(+)</name>
        <dbReference type="ChEBI" id="CHEBI:29103"/>
    </cofactor>
    <text evidence="1">Binds 1 potassium ion per subunit.</text>
</comment>
<comment type="subunit">
    <text evidence="1">Homodimer. Heterotetramer of two MnmE and two MnmG subunits.</text>
</comment>
<comment type="subcellular location">
    <subcellularLocation>
        <location evidence="1">Cytoplasm</location>
    </subcellularLocation>
</comment>
<comment type="similarity">
    <text evidence="1">Belongs to the TRAFAC class TrmE-Era-EngA-EngB-Septin-like GTPase superfamily. TrmE GTPase family.</text>
</comment>
<evidence type="ECO:0000255" key="1">
    <source>
        <dbReference type="HAMAP-Rule" id="MF_00379"/>
    </source>
</evidence>
<reference key="1">
    <citation type="journal article" date="2008" name="J. Bacteriol.">
        <title>The complete genome sequence of Actinobacillus pleuropneumoniae L20 (serotype 5b).</title>
        <authorList>
            <person name="Foote S.J."/>
            <person name="Bosse J.T."/>
            <person name="Bouevitch A.B."/>
            <person name="Langford P.R."/>
            <person name="Young N.M."/>
            <person name="Nash J.H.E."/>
        </authorList>
    </citation>
    <scope>NUCLEOTIDE SEQUENCE [LARGE SCALE GENOMIC DNA]</scope>
    <source>
        <strain>L20</strain>
    </source>
</reference>
<protein>
    <recommendedName>
        <fullName evidence="1">tRNA modification GTPase MnmE</fullName>
        <ecNumber evidence="1">3.6.-.-</ecNumber>
    </recommendedName>
</protein>
<keyword id="KW-0963">Cytoplasm</keyword>
<keyword id="KW-0342">GTP-binding</keyword>
<keyword id="KW-0378">Hydrolase</keyword>
<keyword id="KW-0460">Magnesium</keyword>
<keyword id="KW-0479">Metal-binding</keyword>
<keyword id="KW-0547">Nucleotide-binding</keyword>
<keyword id="KW-0630">Potassium</keyword>
<keyword id="KW-1185">Reference proteome</keyword>
<keyword id="KW-0819">tRNA processing</keyword>
<feature type="chain" id="PRO_1000048792" description="tRNA modification GTPase MnmE">
    <location>
        <begin position="1"/>
        <end position="452"/>
    </location>
</feature>
<feature type="domain" description="TrmE-type G">
    <location>
        <begin position="214"/>
        <end position="375"/>
    </location>
</feature>
<feature type="binding site" evidence="1">
    <location>
        <position position="21"/>
    </location>
    <ligand>
        <name>(6S)-5-formyl-5,6,7,8-tetrahydrofolate</name>
        <dbReference type="ChEBI" id="CHEBI:57457"/>
    </ligand>
</feature>
<feature type="binding site" evidence="1">
    <location>
        <position position="78"/>
    </location>
    <ligand>
        <name>(6S)-5-formyl-5,6,7,8-tetrahydrofolate</name>
        <dbReference type="ChEBI" id="CHEBI:57457"/>
    </ligand>
</feature>
<feature type="binding site" evidence="1">
    <location>
        <position position="118"/>
    </location>
    <ligand>
        <name>(6S)-5-formyl-5,6,7,8-tetrahydrofolate</name>
        <dbReference type="ChEBI" id="CHEBI:57457"/>
    </ligand>
</feature>
<feature type="binding site" evidence="1">
    <location>
        <begin position="224"/>
        <end position="229"/>
    </location>
    <ligand>
        <name>GTP</name>
        <dbReference type="ChEBI" id="CHEBI:37565"/>
    </ligand>
</feature>
<feature type="binding site" evidence="1">
    <location>
        <position position="224"/>
    </location>
    <ligand>
        <name>K(+)</name>
        <dbReference type="ChEBI" id="CHEBI:29103"/>
    </ligand>
</feature>
<feature type="binding site" evidence="1">
    <location>
        <position position="228"/>
    </location>
    <ligand>
        <name>Mg(2+)</name>
        <dbReference type="ChEBI" id="CHEBI:18420"/>
    </ligand>
</feature>
<feature type="binding site" evidence="1">
    <location>
        <begin position="243"/>
        <end position="249"/>
    </location>
    <ligand>
        <name>GTP</name>
        <dbReference type="ChEBI" id="CHEBI:37565"/>
    </ligand>
</feature>
<feature type="binding site" evidence="1">
    <location>
        <position position="243"/>
    </location>
    <ligand>
        <name>K(+)</name>
        <dbReference type="ChEBI" id="CHEBI:29103"/>
    </ligand>
</feature>
<feature type="binding site" evidence="1">
    <location>
        <position position="245"/>
    </location>
    <ligand>
        <name>K(+)</name>
        <dbReference type="ChEBI" id="CHEBI:29103"/>
    </ligand>
</feature>
<feature type="binding site" evidence="1">
    <location>
        <position position="248"/>
    </location>
    <ligand>
        <name>K(+)</name>
        <dbReference type="ChEBI" id="CHEBI:29103"/>
    </ligand>
</feature>
<feature type="binding site" evidence="1">
    <location>
        <position position="249"/>
    </location>
    <ligand>
        <name>Mg(2+)</name>
        <dbReference type="ChEBI" id="CHEBI:18420"/>
    </ligand>
</feature>
<feature type="binding site" evidence="1">
    <location>
        <begin position="268"/>
        <end position="271"/>
    </location>
    <ligand>
        <name>GTP</name>
        <dbReference type="ChEBI" id="CHEBI:37565"/>
    </ligand>
</feature>
<feature type="binding site" evidence="1">
    <location>
        <position position="452"/>
    </location>
    <ligand>
        <name>(6S)-5-formyl-5,6,7,8-tetrahydrofolate</name>
        <dbReference type="ChEBI" id="CHEBI:57457"/>
    </ligand>
</feature>
<organism>
    <name type="scientific">Actinobacillus pleuropneumoniae serotype 5b (strain L20)</name>
    <dbReference type="NCBI Taxonomy" id="416269"/>
    <lineage>
        <taxon>Bacteria</taxon>
        <taxon>Pseudomonadati</taxon>
        <taxon>Pseudomonadota</taxon>
        <taxon>Gammaproteobacteria</taxon>
        <taxon>Pasteurellales</taxon>
        <taxon>Pasteurellaceae</taxon>
        <taxon>Actinobacillus</taxon>
    </lineage>
</organism>
<dbReference type="EC" id="3.6.-.-" evidence="1"/>
<dbReference type="EMBL" id="CP000569">
    <property type="protein sequence ID" value="ABN74574.1"/>
    <property type="molecule type" value="Genomic_DNA"/>
</dbReference>
<dbReference type="RefSeq" id="WP_009875201.1">
    <property type="nucleotide sequence ID" value="NC_009053.1"/>
</dbReference>
<dbReference type="SMR" id="A3N2D8"/>
<dbReference type="STRING" id="416269.APL_1490"/>
<dbReference type="EnsemblBacteria" id="ABN74574">
    <property type="protein sequence ID" value="ABN74574"/>
    <property type="gene ID" value="APL_1490"/>
</dbReference>
<dbReference type="KEGG" id="apl:APL_1490"/>
<dbReference type="PATRIC" id="fig|416269.6.peg.1551"/>
<dbReference type="eggNOG" id="COG0486">
    <property type="taxonomic scope" value="Bacteria"/>
</dbReference>
<dbReference type="HOGENOM" id="CLU_019624_4_1_6"/>
<dbReference type="Proteomes" id="UP000001432">
    <property type="component" value="Chromosome"/>
</dbReference>
<dbReference type="GO" id="GO:0005829">
    <property type="term" value="C:cytosol"/>
    <property type="evidence" value="ECO:0007669"/>
    <property type="project" value="TreeGrafter"/>
</dbReference>
<dbReference type="GO" id="GO:0005525">
    <property type="term" value="F:GTP binding"/>
    <property type="evidence" value="ECO:0007669"/>
    <property type="project" value="UniProtKB-UniRule"/>
</dbReference>
<dbReference type="GO" id="GO:0003924">
    <property type="term" value="F:GTPase activity"/>
    <property type="evidence" value="ECO:0007669"/>
    <property type="project" value="UniProtKB-UniRule"/>
</dbReference>
<dbReference type="GO" id="GO:0046872">
    <property type="term" value="F:metal ion binding"/>
    <property type="evidence" value="ECO:0007669"/>
    <property type="project" value="UniProtKB-KW"/>
</dbReference>
<dbReference type="GO" id="GO:0030488">
    <property type="term" value="P:tRNA methylation"/>
    <property type="evidence" value="ECO:0007669"/>
    <property type="project" value="TreeGrafter"/>
</dbReference>
<dbReference type="GO" id="GO:0002098">
    <property type="term" value="P:tRNA wobble uridine modification"/>
    <property type="evidence" value="ECO:0007669"/>
    <property type="project" value="TreeGrafter"/>
</dbReference>
<dbReference type="CDD" id="cd04164">
    <property type="entry name" value="trmE"/>
    <property type="match status" value="1"/>
</dbReference>
<dbReference type="CDD" id="cd14858">
    <property type="entry name" value="TrmE_N"/>
    <property type="match status" value="1"/>
</dbReference>
<dbReference type="FunFam" id="3.30.1360.120:FF:000001">
    <property type="entry name" value="tRNA modification GTPase MnmE"/>
    <property type="match status" value="1"/>
</dbReference>
<dbReference type="FunFam" id="3.40.50.300:FF:000249">
    <property type="entry name" value="tRNA modification GTPase MnmE"/>
    <property type="match status" value="1"/>
</dbReference>
<dbReference type="Gene3D" id="3.40.50.300">
    <property type="entry name" value="P-loop containing nucleotide triphosphate hydrolases"/>
    <property type="match status" value="1"/>
</dbReference>
<dbReference type="Gene3D" id="3.30.1360.120">
    <property type="entry name" value="Probable tRNA modification gtpase trme, domain 1"/>
    <property type="match status" value="1"/>
</dbReference>
<dbReference type="Gene3D" id="1.20.120.430">
    <property type="entry name" value="tRNA modification GTPase MnmE domain 2"/>
    <property type="match status" value="1"/>
</dbReference>
<dbReference type="HAMAP" id="MF_00379">
    <property type="entry name" value="GTPase_MnmE"/>
    <property type="match status" value="1"/>
</dbReference>
<dbReference type="InterPro" id="IPR031168">
    <property type="entry name" value="G_TrmE"/>
</dbReference>
<dbReference type="InterPro" id="IPR006073">
    <property type="entry name" value="GTP-bd"/>
</dbReference>
<dbReference type="InterPro" id="IPR018948">
    <property type="entry name" value="GTP-bd_TrmE_N"/>
</dbReference>
<dbReference type="InterPro" id="IPR004520">
    <property type="entry name" value="GTPase_MnmE"/>
</dbReference>
<dbReference type="InterPro" id="IPR027368">
    <property type="entry name" value="MnmE_dom2"/>
</dbReference>
<dbReference type="InterPro" id="IPR025867">
    <property type="entry name" value="MnmE_helical"/>
</dbReference>
<dbReference type="InterPro" id="IPR027417">
    <property type="entry name" value="P-loop_NTPase"/>
</dbReference>
<dbReference type="InterPro" id="IPR005225">
    <property type="entry name" value="Small_GTP-bd"/>
</dbReference>
<dbReference type="InterPro" id="IPR027266">
    <property type="entry name" value="TrmE/GcvT_dom1"/>
</dbReference>
<dbReference type="NCBIfam" id="TIGR00450">
    <property type="entry name" value="mnmE_trmE_thdF"/>
    <property type="match status" value="1"/>
</dbReference>
<dbReference type="NCBIfam" id="NF003661">
    <property type="entry name" value="PRK05291.1-3"/>
    <property type="match status" value="1"/>
</dbReference>
<dbReference type="NCBIfam" id="TIGR00231">
    <property type="entry name" value="small_GTP"/>
    <property type="match status" value="1"/>
</dbReference>
<dbReference type="PANTHER" id="PTHR42714">
    <property type="entry name" value="TRNA MODIFICATION GTPASE GTPBP3"/>
    <property type="match status" value="1"/>
</dbReference>
<dbReference type="PANTHER" id="PTHR42714:SF2">
    <property type="entry name" value="TRNA MODIFICATION GTPASE GTPBP3, MITOCHONDRIAL"/>
    <property type="match status" value="1"/>
</dbReference>
<dbReference type="Pfam" id="PF01926">
    <property type="entry name" value="MMR_HSR1"/>
    <property type="match status" value="1"/>
</dbReference>
<dbReference type="Pfam" id="PF12631">
    <property type="entry name" value="MnmE_helical"/>
    <property type="match status" value="1"/>
</dbReference>
<dbReference type="Pfam" id="PF10396">
    <property type="entry name" value="TrmE_N"/>
    <property type="match status" value="1"/>
</dbReference>
<dbReference type="SUPFAM" id="SSF52540">
    <property type="entry name" value="P-loop containing nucleoside triphosphate hydrolases"/>
    <property type="match status" value="1"/>
</dbReference>
<dbReference type="SUPFAM" id="SSF116878">
    <property type="entry name" value="TrmE connector domain"/>
    <property type="match status" value="1"/>
</dbReference>
<dbReference type="PROSITE" id="PS51709">
    <property type="entry name" value="G_TRME"/>
    <property type="match status" value="1"/>
</dbReference>
<gene>
    <name evidence="1" type="primary">mnmE</name>
    <name evidence="1" type="synonym">trmE</name>
    <name type="ordered locus">APL_1490</name>
</gene>
<proteinExistence type="inferred from homology"/>
<sequence length="452" mass="49447">MKDTIVAQATPIGRGGVGILRISGPLAQEVAKEVLGKELKPRLANYLPFKDQDGTVLDQGIALFFKAPNSFTGEDVLELQGHGGQVILDILLKRILTIKGIRIARAGEFSEQAFLNDKLDLAQAEAIADLIDATSEQAARSALKSLQGEFSNKINQLVDSVIYLRTYVEAAIDFPDEEIDFLADGKIEGHLNDTIRQLNGVRKEAKQGAILREGMKVVIAGRPNAGKSSLLNALAGREAAIVTNIAGTTRDVLREHIHIDGMPLHIIDTAGLREASDEVEKIGIQRAWDEIEQADHVLLMIDSTEQTAEAFKTEWADFLAKLPQSIPVTVIRNKVDLSGEAEGLQELDGFTLIRLSAQTKVGVDLLREHLKKSMGYQSSTEGGFLARRRHLQALETAAEHLERGHIQLTQFFAGELLAEELRMVQNALSEITGQFTSDDLLGNIFSSFCIGK</sequence>